<name>Y792_STAEQ</name>
<dbReference type="EMBL" id="CP000029">
    <property type="protein sequence ID" value="AAW54218.1"/>
    <property type="molecule type" value="Genomic_DNA"/>
</dbReference>
<dbReference type="SMR" id="Q5HPW5"/>
<dbReference type="STRING" id="176279.SERP0792"/>
<dbReference type="KEGG" id="ser:SERP0792"/>
<dbReference type="eggNOG" id="COG1461">
    <property type="taxonomic scope" value="Bacteria"/>
</dbReference>
<dbReference type="HOGENOM" id="CLU_017496_1_0_9"/>
<dbReference type="Proteomes" id="UP000000531">
    <property type="component" value="Chromosome"/>
</dbReference>
<dbReference type="GO" id="GO:0004371">
    <property type="term" value="F:glycerone kinase activity"/>
    <property type="evidence" value="ECO:0007669"/>
    <property type="project" value="InterPro"/>
</dbReference>
<dbReference type="GO" id="GO:0006071">
    <property type="term" value="P:glycerol metabolic process"/>
    <property type="evidence" value="ECO:0007669"/>
    <property type="project" value="InterPro"/>
</dbReference>
<dbReference type="Gene3D" id="1.25.40.340">
    <property type="match status" value="1"/>
</dbReference>
<dbReference type="InterPro" id="IPR050270">
    <property type="entry name" value="DegV_domain_contain"/>
</dbReference>
<dbReference type="InterPro" id="IPR004007">
    <property type="entry name" value="DhaL_dom"/>
</dbReference>
<dbReference type="InterPro" id="IPR036117">
    <property type="entry name" value="DhaL_dom_sf"/>
</dbReference>
<dbReference type="InterPro" id="IPR033470">
    <property type="entry name" value="FakA-like_C"/>
</dbReference>
<dbReference type="InterPro" id="IPR048394">
    <property type="entry name" value="FakA-like_M"/>
</dbReference>
<dbReference type="InterPro" id="IPR019986">
    <property type="entry name" value="YloV-like"/>
</dbReference>
<dbReference type="NCBIfam" id="NF038248">
    <property type="entry name" value="FakA_VfrB"/>
    <property type="match status" value="1"/>
</dbReference>
<dbReference type="NCBIfam" id="TIGR03599">
    <property type="entry name" value="YloV"/>
    <property type="match status" value="1"/>
</dbReference>
<dbReference type="PANTHER" id="PTHR33434">
    <property type="entry name" value="DEGV DOMAIN-CONTAINING PROTEIN DR_1986-RELATED"/>
    <property type="match status" value="1"/>
</dbReference>
<dbReference type="PANTHER" id="PTHR33434:SF4">
    <property type="entry name" value="PHOSPHATASE PROTEIN"/>
    <property type="match status" value="1"/>
</dbReference>
<dbReference type="Pfam" id="PF02734">
    <property type="entry name" value="Dak2"/>
    <property type="match status" value="1"/>
</dbReference>
<dbReference type="Pfam" id="PF13684">
    <property type="entry name" value="FakA-like_C"/>
    <property type="match status" value="1"/>
</dbReference>
<dbReference type="Pfam" id="PF21645">
    <property type="entry name" value="FakA-like_M"/>
    <property type="match status" value="1"/>
</dbReference>
<dbReference type="SMART" id="SM01121">
    <property type="entry name" value="Dak1_2"/>
    <property type="match status" value="1"/>
</dbReference>
<dbReference type="SMART" id="SM01120">
    <property type="entry name" value="Dak2"/>
    <property type="match status" value="1"/>
</dbReference>
<dbReference type="SUPFAM" id="SSF101473">
    <property type="entry name" value="DhaL-like"/>
    <property type="match status" value="1"/>
</dbReference>
<dbReference type="PROSITE" id="PS51480">
    <property type="entry name" value="DHAL"/>
    <property type="match status" value="1"/>
</dbReference>
<protein>
    <recommendedName>
        <fullName>Uncharacterized protein SERP0792</fullName>
    </recommendedName>
</protein>
<feature type="chain" id="PRO_0000304165" description="Uncharacterized protein SERP0792">
    <location>
        <begin position="1"/>
        <end position="552"/>
    </location>
</feature>
<feature type="domain" description="DhaL" evidence="1">
    <location>
        <begin position="8"/>
        <end position="200"/>
    </location>
</feature>
<evidence type="ECO:0000255" key="1">
    <source>
        <dbReference type="PROSITE-ProRule" id="PRU00813"/>
    </source>
</evidence>
<gene>
    <name type="ordered locus">SERP0792</name>
</gene>
<organism>
    <name type="scientific">Staphylococcus epidermidis (strain ATCC 35984 / DSM 28319 / BCRC 17069 / CCUG 31568 / BM 3577 / RP62A)</name>
    <dbReference type="NCBI Taxonomy" id="176279"/>
    <lineage>
        <taxon>Bacteria</taxon>
        <taxon>Bacillati</taxon>
        <taxon>Bacillota</taxon>
        <taxon>Bacilli</taxon>
        <taxon>Bacillales</taxon>
        <taxon>Staphylococcaceae</taxon>
        <taxon>Staphylococcus</taxon>
    </lineage>
</organism>
<sequence length="552" mass="60770">MISKINGKLFADMIIQGAQNLSNNADLVDSLNVYPVPDGDTGTNMNLTITSGREEVENNLSQNIGELGKTFSKGLLMGARGNSGVILSQLFRGFCKNIEGEKEISVQQFAESFQAGVETAYKAVMKPVEGTILTVAKDAAKAAMDYVDQAEDCVDLMVHVIEAASESLDNTPNLLAVLKEVGVVDSGGKGLLCVYEGFLKGLKGEKVEAQAPKLDTESFVNDDHDFHGVINTEDIVYGYCTEMMVRFGKNKKAFDEQEFRNDMSEFGDSLLVINDDEIVKVHVHTEHPGDVFNYGQKYGELIKLKVENMREQHREVIRKEQDGIQNKATNESKTVETAIVTISVGDGIAELFKSMGATHIISGGQTMNPSTEDIVKVIEQSKCKRAIILPNNKNIMMASEQAASIVEAETVVIPTKSIPQGISALFQYDQESNLEDNKSHMNDALETVQSGSITFAVRDTKIDGIEIKKDEFMGLAEDKIVISDFNQFHAVKGLLSKLLNEDSEILTMISGEDADNSITNQIIDWIESEYPDVEVEQHEGGQPIYQYFFAVE</sequence>
<reference key="1">
    <citation type="journal article" date="2005" name="J. Bacteriol.">
        <title>Insights on evolution of virulence and resistance from the complete genome analysis of an early methicillin-resistant Staphylococcus aureus strain and a biofilm-producing methicillin-resistant Staphylococcus epidermidis strain.</title>
        <authorList>
            <person name="Gill S.R."/>
            <person name="Fouts D.E."/>
            <person name="Archer G.L."/>
            <person name="Mongodin E.F."/>
            <person name="DeBoy R.T."/>
            <person name="Ravel J."/>
            <person name="Paulsen I.T."/>
            <person name="Kolonay J.F."/>
            <person name="Brinkac L.M."/>
            <person name="Beanan M.J."/>
            <person name="Dodson R.J."/>
            <person name="Daugherty S.C."/>
            <person name="Madupu R."/>
            <person name="Angiuoli S.V."/>
            <person name="Durkin A.S."/>
            <person name="Haft D.H."/>
            <person name="Vamathevan J.J."/>
            <person name="Khouri H."/>
            <person name="Utterback T.R."/>
            <person name="Lee C."/>
            <person name="Dimitrov G."/>
            <person name="Jiang L."/>
            <person name="Qin H."/>
            <person name="Weidman J."/>
            <person name="Tran K."/>
            <person name="Kang K.H."/>
            <person name="Hance I.R."/>
            <person name="Nelson K.E."/>
            <person name="Fraser C.M."/>
        </authorList>
    </citation>
    <scope>NUCLEOTIDE SEQUENCE [LARGE SCALE GENOMIC DNA]</scope>
    <source>
        <strain>ATCC 35984 / DSM 28319 / BCRC 17069 / CCUG 31568 / BM 3577 / RP62A</strain>
    </source>
</reference>
<keyword id="KW-1185">Reference proteome</keyword>
<accession>Q5HPW5</accession>
<proteinExistence type="predicted"/>